<proteinExistence type="inferred from homology"/>
<gene>
    <name evidence="1" type="primary">proS</name>
    <name type="ordered locus">E2348C_0200</name>
</gene>
<reference key="1">
    <citation type="journal article" date="2009" name="J. Bacteriol.">
        <title>Complete genome sequence and comparative genome analysis of enteropathogenic Escherichia coli O127:H6 strain E2348/69.</title>
        <authorList>
            <person name="Iguchi A."/>
            <person name="Thomson N.R."/>
            <person name="Ogura Y."/>
            <person name="Saunders D."/>
            <person name="Ooka T."/>
            <person name="Henderson I.R."/>
            <person name="Harris D."/>
            <person name="Asadulghani M."/>
            <person name="Kurokawa K."/>
            <person name="Dean P."/>
            <person name="Kenny B."/>
            <person name="Quail M.A."/>
            <person name="Thurston S."/>
            <person name="Dougan G."/>
            <person name="Hayashi T."/>
            <person name="Parkhill J."/>
            <person name="Frankel G."/>
        </authorList>
    </citation>
    <scope>NUCLEOTIDE SEQUENCE [LARGE SCALE GENOMIC DNA]</scope>
    <source>
        <strain>E2348/69 / EPEC</strain>
    </source>
</reference>
<feature type="chain" id="PRO_1000185499" description="Proline--tRNA ligase">
    <location>
        <begin position="1"/>
        <end position="572"/>
    </location>
</feature>
<dbReference type="EC" id="6.1.1.15" evidence="1"/>
<dbReference type="EMBL" id="FM180568">
    <property type="protein sequence ID" value="CAS07748.1"/>
    <property type="molecule type" value="Genomic_DNA"/>
</dbReference>
<dbReference type="RefSeq" id="WP_001260694.1">
    <property type="nucleotide sequence ID" value="NC_011601.1"/>
</dbReference>
<dbReference type="SMR" id="B7UJ96"/>
<dbReference type="KEGG" id="ecg:E2348C_0200"/>
<dbReference type="HOGENOM" id="CLU_016739_0_0_6"/>
<dbReference type="Proteomes" id="UP000008205">
    <property type="component" value="Chromosome"/>
</dbReference>
<dbReference type="GO" id="GO:0005829">
    <property type="term" value="C:cytosol"/>
    <property type="evidence" value="ECO:0007669"/>
    <property type="project" value="TreeGrafter"/>
</dbReference>
<dbReference type="GO" id="GO:0002161">
    <property type="term" value="F:aminoacyl-tRNA deacylase activity"/>
    <property type="evidence" value="ECO:0007669"/>
    <property type="project" value="InterPro"/>
</dbReference>
<dbReference type="GO" id="GO:0005524">
    <property type="term" value="F:ATP binding"/>
    <property type="evidence" value="ECO:0007669"/>
    <property type="project" value="UniProtKB-UniRule"/>
</dbReference>
<dbReference type="GO" id="GO:0004827">
    <property type="term" value="F:proline-tRNA ligase activity"/>
    <property type="evidence" value="ECO:0007669"/>
    <property type="project" value="UniProtKB-UniRule"/>
</dbReference>
<dbReference type="GO" id="GO:0006433">
    <property type="term" value="P:prolyl-tRNA aminoacylation"/>
    <property type="evidence" value="ECO:0007669"/>
    <property type="project" value="UniProtKB-UniRule"/>
</dbReference>
<dbReference type="CDD" id="cd04334">
    <property type="entry name" value="ProRS-INS"/>
    <property type="match status" value="1"/>
</dbReference>
<dbReference type="CDD" id="cd00861">
    <property type="entry name" value="ProRS_anticodon_short"/>
    <property type="match status" value="1"/>
</dbReference>
<dbReference type="CDD" id="cd00779">
    <property type="entry name" value="ProRS_core_prok"/>
    <property type="match status" value="1"/>
</dbReference>
<dbReference type="FunFam" id="3.30.930.10:FF:000043">
    <property type="entry name" value="Proline--tRNA ligase"/>
    <property type="match status" value="1"/>
</dbReference>
<dbReference type="FunFam" id="3.30.930.10:FF:000097">
    <property type="entry name" value="Proline--tRNA ligase"/>
    <property type="match status" value="1"/>
</dbReference>
<dbReference type="FunFam" id="3.40.50.800:FF:000006">
    <property type="entry name" value="Proline--tRNA ligase"/>
    <property type="match status" value="1"/>
</dbReference>
<dbReference type="FunFam" id="3.90.960.10:FF:000001">
    <property type="entry name" value="Proline--tRNA ligase"/>
    <property type="match status" value="1"/>
</dbReference>
<dbReference type="Gene3D" id="3.40.50.800">
    <property type="entry name" value="Anticodon-binding domain"/>
    <property type="match status" value="1"/>
</dbReference>
<dbReference type="Gene3D" id="3.30.930.10">
    <property type="entry name" value="Bira Bifunctional Protein, Domain 2"/>
    <property type="match status" value="2"/>
</dbReference>
<dbReference type="Gene3D" id="3.90.960.10">
    <property type="entry name" value="YbaK/aminoacyl-tRNA synthetase-associated domain"/>
    <property type="match status" value="1"/>
</dbReference>
<dbReference type="HAMAP" id="MF_01569">
    <property type="entry name" value="Pro_tRNA_synth_type1"/>
    <property type="match status" value="1"/>
</dbReference>
<dbReference type="InterPro" id="IPR002314">
    <property type="entry name" value="aa-tRNA-synt_IIb"/>
</dbReference>
<dbReference type="InterPro" id="IPR006195">
    <property type="entry name" value="aa-tRNA-synth_II"/>
</dbReference>
<dbReference type="InterPro" id="IPR045864">
    <property type="entry name" value="aa-tRNA-synth_II/BPL/LPL"/>
</dbReference>
<dbReference type="InterPro" id="IPR004154">
    <property type="entry name" value="Anticodon-bd"/>
</dbReference>
<dbReference type="InterPro" id="IPR036621">
    <property type="entry name" value="Anticodon-bd_dom_sf"/>
</dbReference>
<dbReference type="InterPro" id="IPR002316">
    <property type="entry name" value="Pro-tRNA-ligase_IIa"/>
</dbReference>
<dbReference type="InterPro" id="IPR004500">
    <property type="entry name" value="Pro-tRNA-synth_IIa_bac-type"/>
</dbReference>
<dbReference type="InterPro" id="IPR023717">
    <property type="entry name" value="Pro-tRNA-Synthase_IIa_type1"/>
</dbReference>
<dbReference type="InterPro" id="IPR050062">
    <property type="entry name" value="Pro-tRNA_synthetase"/>
</dbReference>
<dbReference type="InterPro" id="IPR044140">
    <property type="entry name" value="ProRS_anticodon_short"/>
</dbReference>
<dbReference type="InterPro" id="IPR033730">
    <property type="entry name" value="ProRS_core_prok"/>
</dbReference>
<dbReference type="InterPro" id="IPR036754">
    <property type="entry name" value="YbaK/aa-tRNA-synt-asso_dom_sf"/>
</dbReference>
<dbReference type="InterPro" id="IPR007214">
    <property type="entry name" value="YbaK/aa-tRNA-synth-assoc-dom"/>
</dbReference>
<dbReference type="NCBIfam" id="NF006625">
    <property type="entry name" value="PRK09194.1"/>
    <property type="match status" value="1"/>
</dbReference>
<dbReference type="NCBIfam" id="TIGR00409">
    <property type="entry name" value="proS_fam_II"/>
    <property type="match status" value="1"/>
</dbReference>
<dbReference type="PANTHER" id="PTHR42753">
    <property type="entry name" value="MITOCHONDRIAL RIBOSOME PROTEIN L39/PROLYL-TRNA LIGASE FAMILY MEMBER"/>
    <property type="match status" value="1"/>
</dbReference>
<dbReference type="PANTHER" id="PTHR42753:SF2">
    <property type="entry name" value="PROLINE--TRNA LIGASE"/>
    <property type="match status" value="1"/>
</dbReference>
<dbReference type="Pfam" id="PF03129">
    <property type="entry name" value="HGTP_anticodon"/>
    <property type="match status" value="1"/>
</dbReference>
<dbReference type="Pfam" id="PF00587">
    <property type="entry name" value="tRNA-synt_2b"/>
    <property type="match status" value="1"/>
</dbReference>
<dbReference type="Pfam" id="PF04073">
    <property type="entry name" value="tRNA_edit"/>
    <property type="match status" value="1"/>
</dbReference>
<dbReference type="PIRSF" id="PIRSF001535">
    <property type="entry name" value="ProRS_1"/>
    <property type="match status" value="1"/>
</dbReference>
<dbReference type="PRINTS" id="PR01046">
    <property type="entry name" value="TRNASYNTHPRO"/>
</dbReference>
<dbReference type="SUPFAM" id="SSF52954">
    <property type="entry name" value="Class II aaRS ABD-related"/>
    <property type="match status" value="1"/>
</dbReference>
<dbReference type="SUPFAM" id="SSF55681">
    <property type="entry name" value="Class II aaRS and biotin synthetases"/>
    <property type="match status" value="1"/>
</dbReference>
<dbReference type="SUPFAM" id="SSF55826">
    <property type="entry name" value="YbaK/ProRS associated domain"/>
    <property type="match status" value="1"/>
</dbReference>
<dbReference type="PROSITE" id="PS50862">
    <property type="entry name" value="AA_TRNA_LIGASE_II"/>
    <property type="match status" value="1"/>
</dbReference>
<name>SYP_ECO27</name>
<accession>B7UJ96</accession>
<evidence type="ECO:0000255" key="1">
    <source>
        <dbReference type="HAMAP-Rule" id="MF_01569"/>
    </source>
</evidence>
<organism>
    <name type="scientific">Escherichia coli O127:H6 (strain E2348/69 / EPEC)</name>
    <dbReference type="NCBI Taxonomy" id="574521"/>
    <lineage>
        <taxon>Bacteria</taxon>
        <taxon>Pseudomonadati</taxon>
        <taxon>Pseudomonadota</taxon>
        <taxon>Gammaproteobacteria</taxon>
        <taxon>Enterobacterales</taxon>
        <taxon>Enterobacteriaceae</taxon>
        <taxon>Escherichia</taxon>
    </lineage>
</organism>
<comment type="function">
    <text evidence="1">Catalyzes the attachment of proline to tRNA(Pro) in a two-step reaction: proline is first activated by ATP to form Pro-AMP and then transferred to the acceptor end of tRNA(Pro). As ProRS can inadvertently accommodate and process non-cognate amino acids such as alanine and cysteine, to avoid such errors it has two additional distinct editing activities against alanine. One activity is designated as 'pretransfer' editing and involves the tRNA(Pro)-independent hydrolysis of activated Ala-AMP. The other activity is designated 'posttransfer' editing and involves deacylation of mischarged Ala-tRNA(Pro). The misacylated Cys-tRNA(Pro) is not edited by ProRS.</text>
</comment>
<comment type="catalytic activity">
    <reaction evidence="1">
        <text>tRNA(Pro) + L-proline + ATP = L-prolyl-tRNA(Pro) + AMP + diphosphate</text>
        <dbReference type="Rhea" id="RHEA:14305"/>
        <dbReference type="Rhea" id="RHEA-COMP:9700"/>
        <dbReference type="Rhea" id="RHEA-COMP:9702"/>
        <dbReference type="ChEBI" id="CHEBI:30616"/>
        <dbReference type="ChEBI" id="CHEBI:33019"/>
        <dbReference type="ChEBI" id="CHEBI:60039"/>
        <dbReference type="ChEBI" id="CHEBI:78442"/>
        <dbReference type="ChEBI" id="CHEBI:78532"/>
        <dbReference type="ChEBI" id="CHEBI:456215"/>
        <dbReference type="EC" id="6.1.1.15"/>
    </reaction>
</comment>
<comment type="subunit">
    <text evidence="1">Homodimer.</text>
</comment>
<comment type="subcellular location">
    <subcellularLocation>
        <location evidence="1">Cytoplasm</location>
    </subcellularLocation>
</comment>
<comment type="domain">
    <text evidence="1">Consists of three domains: the N-terminal catalytic domain, the editing domain and the C-terminal anticodon-binding domain.</text>
</comment>
<comment type="similarity">
    <text evidence="1">Belongs to the class-II aminoacyl-tRNA synthetase family. ProS type 1 subfamily.</text>
</comment>
<protein>
    <recommendedName>
        <fullName evidence="1">Proline--tRNA ligase</fullName>
        <ecNumber evidence="1">6.1.1.15</ecNumber>
    </recommendedName>
    <alternativeName>
        <fullName evidence="1">Prolyl-tRNA synthetase</fullName>
        <shortName evidence="1">ProRS</shortName>
    </alternativeName>
</protein>
<keyword id="KW-0030">Aminoacyl-tRNA synthetase</keyword>
<keyword id="KW-0067">ATP-binding</keyword>
<keyword id="KW-0963">Cytoplasm</keyword>
<keyword id="KW-0436">Ligase</keyword>
<keyword id="KW-0547">Nucleotide-binding</keyword>
<keyword id="KW-0648">Protein biosynthesis</keyword>
<keyword id="KW-1185">Reference proteome</keyword>
<sequence>MRTSQYLLSTLKETPADAEVISHQLMLRAGMIRKLASGLYTWLPTGVRVLKKVENIVREEMNNAGAIEVLMPVVQPSELWQESGRWEQYGPELLRIADRGDRPFVLGPTHEEVITDLIRNELSSYKQLPLNFYQIQTKFRDEVRPRFGVMRSREFLMKDAYSFHTSQESLQETYDAMYAAYSKIFSRMGLDFRAVQADTGSIGGSASHEFQVLAQSGEDDVVFSDTSDYAANIELAEAIAPKEPRAAATQEMTLVDTPNAKTIAELVEQFNLPIEKTVKTLLVKAVEGSSFPLVALLVRGDHELNEVKAEKLPQVASPLTFATEEEIRAVVKAGPGSLGPVNMPIPVVIDRTVAAMSDFAAGANIDGKHYFGINWDRDVATPEIADIRNVVAGDPSPDGQGTLLIKRGIEVGHIFQLGTKYSEALKASVQGEDGRNQILTMGCYGIGVTRVVAAAIEQNYDERGIVWPDAIAPFQVAILPMNMHKSFRVQELAEKLYSELRAQGIEVLLDDRKERPGVMFADMELIGIPHTIVLGDRNLDNDDIEYKYRRNGEKQLIKTGDIVDYLVKQIKG</sequence>